<dbReference type="EMBL" id="CP000227">
    <property type="protein sequence ID" value="ACM14059.1"/>
    <property type="molecule type" value="Genomic_DNA"/>
</dbReference>
<dbReference type="SMR" id="B9IVD5"/>
<dbReference type="KEGG" id="bcq:BCQ_3631"/>
<dbReference type="HOGENOM" id="CLU_129218_1_0_9"/>
<dbReference type="Proteomes" id="UP000000441">
    <property type="component" value="Chromosome"/>
</dbReference>
<dbReference type="Gene3D" id="1.10.10.10">
    <property type="entry name" value="Winged helix-like DNA-binding domain superfamily/Winged helix DNA-binding domain"/>
    <property type="match status" value="1"/>
</dbReference>
<dbReference type="HAMAP" id="MF_00245">
    <property type="entry name" value="UPF0122"/>
    <property type="match status" value="1"/>
</dbReference>
<dbReference type="InterPro" id="IPR013324">
    <property type="entry name" value="RNA_pol_sigma_r3/r4-like"/>
</dbReference>
<dbReference type="InterPro" id="IPR007394">
    <property type="entry name" value="UPF0122"/>
</dbReference>
<dbReference type="InterPro" id="IPR054831">
    <property type="entry name" value="UPF0122_fam_protein"/>
</dbReference>
<dbReference type="InterPro" id="IPR036388">
    <property type="entry name" value="WH-like_DNA-bd_sf"/>
</dbReference>
<dbReference type="NCBIfam" id="NF001068">
    <property type="entry name" value="PRK00118.1-4"/>
    <property type="match status" value="1"/>
</dbReference>
<dbReference type="NCBIfam" id="NF001070">
    <property type="entry name" value="PRK00118.1-6"/>
    <property type="match status" value="1"/>
</dbReference>
<dbReference type="NCBIfam" id="NF045758">
    <property type="entry name" value="YlxM"/>
    <property type="match status" value="1"/>
</dbReference>
<dbReference type="PANTHER" id="PTHR40083">
    <property type="entry name" value="UPF0122 PROTEIN CBO2450/CLC_2298"/>
    <property type="match status" value="1"/>
</dbReference>
<dbReference type="PANTHER" id="PTHR40083:SF1">
    <property type="entry name" value="UPF0122 PROTEIN YLXM"/>
    <property type="match status" value="1"/>
</dbReference>
<dbReference type="Pfam" id="PF04297">
    <property type="entry name" value="UPF0122"/>
    <property type="match status" value="1"/>
</dbReference>
<dbReference type="SUPFAM" id="SSF88659">
    <property type="entry name" value="Sigma3 and sigma4 domains of RNA polymerase sigma factors"/>
    <property type="match status" value="1"/>
</dbReference>
<sequence length="110" mass="13310">MLEKTTRMNYLFDFYQSLLTQKQRSYMSLYYLDDLSLGEIAEEFDVSRQAVYDNIKRTEAMLEEYEEKLVLLQKFQERQRLVAKLKQLISEEEHVNEEMKQVVEAIEKLD</sequence>
<evidence type="ECO:0000255" key="1">
    <source>
        <dbReference type="HAMAP-Rule" id="MF_00245"/>
    </source>
</evidence>
<gene>
    <name type="ordered locus">BCQ_3631</name>
</gene>
<reference key="1">
    <citation type="journal article" date="2009" name="J. Bacteriol.">
        <title>Complete genome sequence of the extremophilic Bacillus cereus strain Q1 with industrial applications.</title>
        <authorList>
            <person name="Xiong Z."/>
            <person name="Jiang Y."/>
            <person name="Qi D."/>
            <person name="Lu H."/>
            <person name="Yang F."/>
            <person name="Yang J."/>
            <person name="Chen L."/>
            <person name="Sun L."/>
            <person name="Xu X."/>
            <person name="Xue Y."/>
            <person name="Zhu Y."/>
            <person name="Jin Q."/>
        </authorList>
    </citation>
    <scope>NUCLEOTIDE SEQUENCE [LARGE SCALE GENOMIC DNA]</scope>
    <source>
        <strain>Q1</strain>
    </source>
</reference>
<protein>
    <recommendedName>
        <fullName evidence="1">UPF0122 protein BCQ_3631</fullName>
    </recommendedName>
</protein>
<organism>
    <name type="scientific">Bacillus cereus (strain Q1)</name>
    <dbReference type="NCBI Taxonomy" id="361100"/>
    <lineage>
        <taxon>Bacteria</taxon>
        <taxon>Bacillati</taxon>
        <taxon>Bacillota</taxon>
        <taxon>Bacilli</taxon>
        <taxon>Bacillales</taxon>
        <taxon>Bacillaceae</taxon>
        <taxon>Bacillus</taxon>
        <taxon>Bacillus cereus group</taxon>
    </lineage>
</organism>
<comment type="function">
    <text evidence="1">Might take part in the signal recognition particle (SRP) pathway. This is inferred from the conservation of its genetic proximity to ftsY/ffh. May be a regulatory protein.</text>
</comment>
<comment type="similarity">
    <text evidence="1">Belongs to the UPF0122 family.</text>
</comment>
<feature type="chain" id="PRO_1000197588" description="UPF0122 protein BCQ_3631">
    <location>
        <begin position="1"/>
        <end position="110"/>
    </location>
</feature>
<name>Y3631_BACCQ</name>
<proteinExistence type="inferred from homology"/>
<accession>B9IVD5</accession>